<feature type="chain" id="PRO_0000049271" description="Homeobox protein prophet of Pit-1">
    <location>
        <begin position="1"/>
        <end position="226"/>
    </location>
</feature>
<feature type="DNA-binding region" description="Homeobox" evidence="1">
    <location>
        <begin position="69"/>
        <end position="128"/>
    </location>
</feature>
<feature type="region of interest" description="Disordered" evidence="2">
    <location>
        <begin position="1"/>
        <end position="75"/>
    </location>
</feature>
<feature type="region of interest" description="Disordered" evidence="2">
    <location>
        <begin position="196"/>
        <end position="226"/>
    </location>
</feature>
<feature type="compositionally biased region" description="Basic and acidic residues" evidence="2">
    <location>
        <begin position="1"/>
        <end position="12"/>
    </location>
</feature>
<feature type="compositionally biased region" description="Basic residues" evidence="2">
    <location>
        <begin position="64"/>
        <end position="74"/>
    </location>
</feature>
<feature type="compositionally biased region" description="Low complexity" evidence="2">
    <location>
        <begin position="216"/>
        <end position="226"/>
    </location>
</feature>
<feature type="sequence variant" id="VAR_054972" description="In dbSNP:rs7445271." evidence="6 9 11">
    <original>N</original>
    <variation>S</variation>
    <location>
        <position position="20"/>
    </location>
</feature>
<feature type="sequence variant" id="VAR_003768" description="In CPHD2; familial; no detectable DNA binding observed with the mutant protein in electromobility shift assays; whereas in vitro translated PROP1 and the mutant proteins were similar in their expression and electrophoretic properties; dbSNP:rs121917843." evidence="4 7 11">
    <original>R</original>
    <variation>C</variation>
    <location>
        <position position="73"/>
    </location>
</feature>
<feature type="sequence variant" id="VAR_012746" description="In CPHD2; familial; dbSNP:rs121917842." evidence="4">
    <original>R</original>
    <variation>H</variation>
    <location>
        <position position="73"/>
    </location>
</feature>
<feature type="sequence variant" id="VAR_063235" description="In CPHD2; impairs binding of the mutated protein to DNA target sequences; dbSNP:rs121917841." evidence="3">
    <original>F</original>
    <variation>S</variation>
    <location>
        <position position="88"/>
    </location>
</feature>
<feature type="sequence variant" id="VAR_063236" description="In CPHD2; displays a significant decrease in DNA binding on a paired-box response element (PRDQ9) and trans-activation of a luciferase reporter gene; dbSNP:rs137853100." evidence="5">
    <original>R</original>
    <variation>Q</variation>
    <location>
        <position position="99"/>
    </location>
</feature>
<feature type="sequence variant" id="VAR_003769" description="In CPHD2; familial; dbSNP:rs121917840." evidence="9">
    <original>F</original>
    <variation>I</variation>
    <location>
        <position position="117"/>
    </location>
</feature>
<feature type="sequence variant" id="VAR_003770" description="In CPHD2; familial; dbSNP:rs121917839." evidence="9 10">
    <original>R</original>
    <variation>C</variation>
    <location>
        <position position="120"/>
    </location>
</feature>
<feature type="sequence variant" id="VAR_054973" description="In CPHD2; dbSNP:rs146918863." evidence="8">
    <original>R</original>
    <variation>W</variation>
    <location>
        <position position="125"/>
    </location>
</feature>
<feature type="sequence variant" id="VAR_014531" description="In dbSNP:rs1800197.">
    <original>A</original>
    <variation>T</variation>
    <location>
        <position position="142"/>
    </location>
</feature>
<protein>
    <recommendedName>
        <fullName>Homeobox protein prophet of Pit-1</fullName>
        <shortName>PROP-1</shortName>
    </recommendedName>
    <alternativeName>
        <fullName>Pituitary-specific homeodomain factor</fullName>
    </alternativeName>
</protein>
<dbReference type="EMBL" id="AF076214">
    <property type="protein sequence ID" value="AAC77453.1"/>
    <property type="molecule type" value="Genomic_DNA"/>
</dbReference>
<dbReference type="EMBL" id="AF076215">
    <property type="protein sequence ID" value="AAC77454.1"/>
    <property type="molecule type" value="mRNA"/>
</dbReference>
<dbReference type="EMBL" id="AF041141">
    <property type="protein sequence ID" value="AAC27900.1"/>
    <property type="molecule type" value="Genomic_DNA"/>
</dbReference>
<dbReference type="EMBL" id="AF041139">
    <property type="protein sequence ID" value="AAC27900.1"/>
    <property type="status" value="JOINED"/>
    <property type="molecule type" value="Genomic_DNA"/>
</dbReference>
<dbReference type="EMBL" id="AF041140">
    <property type="protein sequence ID" value="AAC27900.1"/>
    <property type="status" value="JOINED"/>
    <property type="molecule type" value="Genomic_DNA"/>
</dbReference>
<dbReference type="EMBL" id="AC136940">
    <property type="status" value="NOT_ANNOTATED_CDS"/>
    <property type="molecule type" value="Genomic_DNA"/>
</dbReference>
<dbReference type="EMBL" id="BC069076">
    <property type="protein sequence ID" value="AAH69076.1"/>
    <property type="molecule type" value="mRNA"/>
</dbReference>
<dbReference type="CCDS" id="CCDS4430.1"/>
<dbReference type="RefSeq" id="NP_006252.4">
    <property type="nucleotide sequence ID" value="NM_006261.5"/>
</dbReference>
<dbReference type="SMR" id="O75360"/>
<dbReference type="BioGRID" id="111610">
    <property type="interactions" value="62"/>
</dbReference>
<dbReference type="FunCoup" id="O75360">
    <property type="interactions" value="201"/>
</dbReference>
<dbReference type="IntAct" id="O75360">
    <property type="interactions" value="61"/>
</dbReference>
<dbReference type="STRING" id="9606.ENSP00000311290"/>
<dbReference type="iPTMnet" id="O75360"/>
<dbReference type="PhosphoSitePlus" id="O75360"/>
<dbReference type="BioMuta" id="PROP1"/>
<dbReference type="MassIVE" id="O75360"/>
<dbReference type="PaxDb" id="9606-ENSP00000311290"/>
<dbReference type="PeptideAtlas" id="O75360"/>
<dbReference type="ProteomicsDB" id="49924"/>
<dbReference type="Antibodypedia" id="29400">
    <property type="antibodies" value="108 antibodies from 25 providers"/>
</dbReference>
<dbReference type="DNASU" id="5626"/>
<dbReference type="Ensembl" id="ENST00000308304.2">
    <property type="protein sequence ID" value="ENSP00000311290.2"/>
    <property type="gene ID" value="ENSG00000175325.2"/>
</dbReference>
<dbReference type="GeneID" id="5626"/>
<dbReference type="KEGG" id="hsa:5626"/>
<dbReference type="MANE-Select" id="ENST00000308304.2">
    <property type="protein sequence ID" value="ENSP00000311290.2"/>
    <property type="RefSeq nucleotide sequence ID" value="NM_006261.5"/>
    <property type="RefSeq protein sequence ID" value="NP_006252.4"/>
</dbReference>
<dbReference type="UCSC" id="uc003mif.1">
    <property type="organism name" value="human"/>
</dbReference>
<dbReference type="AGR" id="HGNC:9455"/>
<dbReference type="CTD" id="5626"/>
<dbReference type="DisGeNET" id="5626"/>
<dbReference type="GeneCards" id="PROP1"/>
<dbReference type="GeneReviews" id="PROP1"/>
<dbReference type="HGNC" id="HGNC:9455">
    <property type="gene designation" value="PROP1"/>
</dbReference>
<dbReference type="HPA" id="ENSG00000175325">
    <property type="expression patterns" value="Tissue enriched (pituitary)"/>
</dbReference>
<dbReference type="MalaCards" id="PROP1"/>
<dbReference type="MIM" id="262600">
    <property type="type" value="phenotype"/>
</dbReference>
<dbReference type="MIM" id="601538">
    <property type="type" value="gene"/>
</dbReference>
<dbReference type="neXtProt" id="NX_O75360"/>
<dbReference type="OpenTargets" id="ENSG00000175325"/>
<dbReference type="Orphanet" id="95494">
    <property type="disease" value="Combined pituitary hormone deficiencies, genetic forms"/>
</dbReference>
<dbReference type="Orphanet" id="226307">
    <property type="disease" value="Hypothyroidism due to deficient transcription factors involved in pituitary development or function"/>
</dbReference>
<dbReference type="Orphanet" id="90695">
    <property type="disease" value="Non-acquired panhypopituitarism"/>
</dbReference>
<dbReference type="PharmGKB" id="PA33808"/>
<dbReference type="VEuPathDB" id="HostDB:ENSG00000175325"/>
<dbReference type="eggNOG" id="KOG0490">
    <property type="taxonomic scope" value="Eukaryota"/>
</dbReference>
<dbReference type="GeneTree" id="ENSGT00940000162292"/>
<dbReference type="HOGENOM" id="CLU_044912_1_0_1"/>
<dbReference type="InParanoid" id="O75360"/>
<dbReference type="OMA" id="PEDWYPT"/>
<dbReference type="OrthoDB" id="6159439at2759"/>
<dbReference type="PAN-GO" id="O75360">
    <property type="GO annotations" value="4 GO annotations based on evolutionary models"/>
</dbReference>
<dbReference type="PhylomeDB" id="O75360"/>
<dbReference type="TreeFam" id="TF315976"/>
<dbReference type="PathwayCommons" id="O75360"/>
<dbReference type="SignaLink" id="O75360"/>
<dbReference type="BioGRID-ORCS" id="5626">
    <property type="hits" value="9 hits in 1168 CRISPR screens"/>
</dbReference>
<dbReference type="GeneWiki" id="PROP1"/>
<dbReference type="GenomeRNAi" id="5626"/>
<dbReference type="Pharos" id="O75360">
    <property type="development level" value="Tbio"/>
</dbReference>
<dbReference type="PRO" id="PR:O75360"/>
<dbReference type="Proteomes" id="UP000005640">
    <property type="component" value="Chromosome 5"/>
</dbReference>
<dbReference type="RNAct" id="O75360">
    <property type="molecule type" value="protein"/>
</dbReference>
<dbReference type="Bgee" id="ENSG00000175325">
    <property type="expression patterns" value="Expressed in pituitary gland and 1 other cell type or tissue"/>
</dbReference>
<dbReference type="GO" id="GO:0000785">
    <property type="term" value="C:chromatin"/>
    <property type="evidence" value="ECO:0000247"/>
    <property type="project" value="NTNU_SB"/>
</dbReference>
<dbReference type="GO" id="GO:0005634">
    <property type="term" value="C:nucleus"/>
    <property type="evidence" value="ECO:0007669"/>
    <property type="project" value="UniProtKB-SubCell"/>
</dbReference>
<dbReference type="GO" id="GO:0005667">
    <property type="term" value="C:transcription regulator complex"/>
    <property type="evidence" value="ECO:0000318"/>
    <property type="project" value="GO_Central"/>
</dbReference>
<dbReference type="GO" id="GO:0008013">
    <property type="term" value="F:beta-catenin binding"/>
    <property type="evidence" value="ECO:0007669"/>
    <property type="project" value="Ensembl"/>
</dbReference>
<dbReference type="GO" id="GO:0003682">
    <property type="term" value="F:chromatin binding"/>
    <property type="evidence" value="ECO:0007669"/>
    <property type="project" value="Ensembl"/>
</dbReference>
<dbReference type="GO" id="GO:0001228">
    <property type="term" value="F:DNA-binding transcription activator activity, RNA polymerase II-specific"/>
    <property type="evidence" value="ECO:0007669"/>
    <property type="project" value="Ensembl"/>
</dbReference>
<dbReference type="GO" id="GO:0000981">
    <property type="term" value="F:DNA-binding transcription factor activity, RNA polymerase II-specific"/>
    <property type="evidence" value="ECO:0000247"/>
    <property type="project" value="NTNU_SB"/>
</dbReference>
<dbReference type="GO" id="GO:0001227">
    <property type="term" value="F:DNA-binding transcription repressor activity, RNA polymerase II-specific"/>
    <property type="evidence" value="ECO:0007669"/>
    <property type="project" value="Ensembl"/>
</dbReference>
<dbReference type="GO" id="GO:0000978">
    <property type="term" value="F:RNA polymerase II cis-regulatory region sequence-specific DNA binding"/>
    <property type="evidence" value="ECO:0000318"/>
    <property type="project" value="GO_Central"/>
</dbReference>
<dbReference type="GO" id="GO:1990837">
    <property type="term" value="F:sequence-specific double-stranded DNA binding"/>
    <property type="evidence" value="ECO:0000314"/>
    <property type="project" value="ARUK-UCL"/>
</dbReference>
<dbReference type="GO" id="GO:0006915">
    <property type="term" value="P:apoptotic process"/>
    <property type="evidence" value="ECO:0007669"/>
    <property type="project" value="Ensembl"/>
</dbReference>
<dbReference type="GO" id="GO:0001568">
    <property type="term" value="P:blood vessel development"/>
    <property type="evidence" value="ECO:0007669"/>
    <property type="project" value="Ensembl"/>
</dbReference>
<dbReference type="GO" id="GO:0016477">
    <property type="term" value="P:cell migration"/>
    <property type="evidence" value="ECO:0007669"/>
    <property type="project" value="Ensembl"/>
</dbReference>
<dbReference type="GO" id="GO:0007417">
    <property type="term" value="P:central nervous system development"/>
    <property type="evidence" value="ECO:0000304"/>
    <property type="project" value="ProtInc"/>
</dbReference>
<dbReference type="GO" id="GO:0009953">
    <property type="term" value="P:dorsal/ventral pattern formation"/>
    <property type="evidence" value="ECO:0007669"/>
    <property type="project" value="Ensembl"/>
</dbReference>
<dbReference type="GO" id="GO:0048850">
    <property type="term" value="P:hypophysis morphogenesis"/>
    <property type="evidence" value="ECO:0007669"/>
    <property type="project" value="Ensembl"/>
</dbReference>
<dbReference type="GO" id="GO:0021979">
    <property type="term" value="P:hypothalamus cell differentiation"/>
    <property type="evidence" value="ECO:0007669"/>
    <property type="project" value="Ensembl"/>
</dbReference>
<dbReference type="GO" id="GO:0043066">
    <property type="term" value="P:negative regulation of apoptotic process"/>
    <property type="evidence" value="ECO:0007669"/>
    <property type="project" value="Ensembl"/>
</dbReference>
<dbReference type="GO" id="GO:0006357">
    <property type="term" value="P:regulation of transcription by RNA polymerase II"/>
    <property type="evidence" value="ECO:0000318"/>
    <property type="project" value="GO_Central"/>
</dbReference>
<dbReference type="GO" id="GO:0060126">
    <property type="term" value="P:somatotropin secreting cell differentiation"/>
    <property type="evidence" value="ECO:0007669"/>
    <property type="project" value="Ensembl"/>
</dbReference>
<dbReference type="CDD" id="cd00086">
    <property type="entry name" value="homeodomain"/>
    <property type="match status" value="1"/>
</dbReference>
<dbReference type="FunFam" id="1.10.10.60:FF:000138">
    <property type="entry name" value="Homeobox protein prophet of Pit-1"/>
    <property type="match status" value="1"/>
</dbReference>
<dbReference type="Gene3D" id="1.10.10.60">
    <property type="entry name" value="Homeodomain-like"/>
    <property type="match status" value="1"/>
</dbReference>
<dbReference type="InterPro" id="IPR001356">
    <property type="entry name" value="HD"/>
</dbReference>
<dbReference type="InterPro" id="IPR017970">
    <property type="entry name" value="Homeobox_CS"/>
</dbReference>
<dbReference type="InterPro" id="IPR009057">
    <property type="entry name" value="Homeodomain-like_sf"/>
</dbReference>
<dbReference type="InterPro" id="IPR000047">
    <property type="entry name" value="HTH_motif"/>
</dbReference>
<dbReference type="InterPro" id="IPR042412">
    <property type="entry name" value="PROP1"/>
</dbReference>
<dbReference type="PANTHER" id="PTHR47409">
    <property type="entry name" value="HOMEOBOX PROTEIN PROPHET OF PIT-1"/>
    <property type="match status" value="1"/>
</dbReference>
<dbReference type="PANTHER" id="PTHR47409:SF1">
    <property type="entry name" value="HOMEOBOX PROTEIN PROPHET OF PIT-1"/>
    <property type="match status" value="1"/>
</dbReference>
<dbReference type="Pfam" id="PF00046">
    <property type="entry name" value="Homeodomain"/>
    <property type="match status" value="1"/>
</dbReference>
<dbReference type="PRINTS" id="PR00031">
    <property type="entry name" value="HTHREPRESSR"/>
</dbReference>
<dbReference type="SMART" id="SM00389">
    <property type="entry name" value="HOX"/>
    <property type="match status" value="1"/>
</dbReference>
<dbReference type="SUPFAM" id="SSF46689">
    <property type="entry name" value="Homeodomain-like"/>
    <property type="match status" value="1"/>
</dbReference>
<dbReference type="PROSITE" id="PS00027">
    <property type="entry name" value="HOMEOBOX_1"/>
    <property type="match status" value="1"/>
</dbReference>
<dbReference type="PROSITE" id="PS50071">
    <property type="entry name" value="HOMEOBOX_2"/>
    <property type="match status" value="1"/>
</dbReference>
<proteinExistence type="evidence at protein level"/>
<keyword id="KW-0225">Disease variant</keyword>
<keyword id="KW-0238">DNA-binding</keyword>
<keyword id="KW-0242">Dwarfism</keyword>
<keyword id="KW-0371">Homeobox</keyword>
<keyword id="KW-0539">Nucleus</keyword>
<keyword id="KW-1185">Reference proteome</keyword>
<reference key="1">
    <citation type="journal article" date="1998" name="FEBS Lett.">
        <title>Human Prop-1: cloning, mapping, genomic structure. Mutations in familial combined pituitary hormone deficiency.</title>
        <authorList>
            <person name="Duquesnoy P."/>
            <person name="Roy A."/>
            <person name="Dastot F."/>
            <person name="Ghali I."/>
            <person name="Teinturier C."/>
            <person name="Netchine I."/>
            <person name="Cacheux V."/>
            <person name="Hafez M."/>
            <person name="Salah N."/>
            <person name="Chaussain J.-L."/>
            <person name="Goossens M."/>
            <person name="Bougneres P."/>
            <person name="Amselem S."/>
        </authorList>
    </citation>
    <scope>NUCLEOTIDE SEQUENCE [GENOMIC DNA / MRNA]</scope>
    <scope>VARIANT SER-20</scope>
    <scope>VARIANT CPHD CYS-73</scope>
</reference>
<reference key="2">
    <citation type="journal article" date="1998" name="Nat. Genet.">
        <title>Mutations in PROP1 cause familial combined pituitary hormone deficiency.</title>
        <authorList>
            <person name="Wu W."/>
            <person name="Cogan J.D."/>
            <person name="Pfaeffle R.W."/>
            <person name="Dasen J.S."/>
            <person name="Frisch H."/>
            <person name="O'Connell S.M."/>
            <person name="Flynn S.E."/>
            <person name="Brown M.R."/>
            <person name="Mullis P.E."/>
            <person name="Parks J.S."/>
            <person name="Phillips J.A. III"/>
            <person name="Rosenfeld M.G."/>
        </authorList>
    </citation>
    <scope>NUCLEOTIDE SEQUENCE [GENOMIC DNA]</scope>
    <scope>VARIANT SER-20</scope>
    <scope>VARIANTS CPHD2 ILE-117 AND CYS-120</scope>
</reference>
<reference key="3">
    <citation type="journal article" date="2004" name="Nature">
        <title>The DNA sequence and comparative analysis of human chromosome 5.</title>
        <authorList>
            <person name="Schmutz J."/>
            <person name="Martin J."/>
            <person name="Terry A."/>
            <person name="Couronne O."/>
            <person name="Grimwood J."/>
            <person name="Lowry S."/>
            <person name="Gordon L.A."/>
            <person name="Scott D."/>
            <person name="Xie G."/>
            <person name="Huang W."/>
            <person name="Hellsten U."/>
            <person name="Tran-Gyamfi M."/>
            <person name="She X."/>
            <person name="Prabhakar S."/>
            <person name="Aerts A."/>
            <person name="Altherr M."/>
            <person name="Bajorek E."/>
            <person name="Black S."/>
            <person name="Branscomb E."/>
            <person name="Caoile C."/>
            <person name="Challacombe J.F."/>
            <person name="Chan Y.M."/>
            <person name="Denys M."/>
            <person name="Detter J.C."/>
            <person name="Escobar J."/>
            <person name="Flowers D."/>
            <person name="Fotopulos D."/>
            <person name="Glavina T."/>
            <person name="Gomez M."/>
            <person name="Gonzales E."/>
            <person name="Goodstein D."/>
            <person name="Grigoriev I."/>
            <person name="Groza M."/>
            <person name="Hammon N."/>
            <person name="Hawkins T."/>
            <person name="Haydu L."/>
            <person name="Israni S."/>
            <person name="Jett J."/>
            <person name="Kadner K."/>
            <person name="Kimball H."/>
            <person name="Kobayashi A."/>
            <person name="Lopez F."/>
            <person name="Lou Y."/>
            <person name="Martinez D."/>
            <person name="Medina C."/>
            <person name="Morgan J."/>
            <person name="Nandkeshwar R."/>
            <person name="Noonan J.P."/>
            <person name="Pitluck S."/>
            <person name="Pollard M."/>
            <person name="Predki P."/>
            <person name="Priest J."/>
            <person name="Ramirez L."/>
            <person name="Retterer J."/>
            <person name="Rodriguez A."/>
            <person name="Rogers S."/>
            <person name="Salamov A."/>
            <person name="Salazar A."/>
            <person name="Thayer N."/>
            <person name="Tice H."/>
            <person name="Tsai M."/>
            <person name="Ustaszewska A."/>
            <person name="Vo N."/>
            <person name="Wheeler J."/>
            <person name="Wu K."/>
            <person name="Yang J."/>
            <person name="Dickson M."/>
            <person name="Cheng J.-F."/>
            <person name="Eichler E.E."/>
            <person name="Olsen A."/>
            <person name="Pennacchio L.A."/>
            <person name="Rokhsar D.S."/>
            <person name="Richardson P."/>
            <person name="Lucas S.M."/>
            <person name="Myers R.M."/>
            <person name="Rubin E.M."/>
        </authorList>
    </citation>
    <scope>NUCLEOTIDE SEQUENCE [LARGE SCALE GENOMIC DNA]</scope>
</reference>
<reference key="4">
    <citation type="journal article" date="2004" name="Genome Res.">
        <title>The status, quality, and expansion of the NIH full-length cDNA project: the Mammalian Gene Collection (MGC).</title>
        <authorList>
            <consortium name="The MGC Project Team"/>
        </authorList>
    </citation>
    <scope>NUCLEOTIDE SEQUENCE [LARGE SCALE MRNA]</scope>
    <scope>VARIANT SER-20</scope>
</reference>
<reference key="5">
    <citation type="journal article" date="1998" name="J. Clin. Endocrinol. Metab.">
        <title>Phenotypic variability in familial combined pituitary hormone deficiency caused by a PROP1 gene mutation resulting in the substitution of Arg--&gt;Cys at codon 120 (R120C).</title>
        <authorList>
            <person name="Fluck C."/>
            <person name="Deladoey J."/>
            <person name="Rutishauser K."/>
            <person name="Eble A."/>
            <person name="Marti U."/>
            <person name="Wu W."/>
            <person name="Mullis P.E."/>
        </authorList>
    </citation>
    <scope>VARIANT CPHD2 CYS-120</scope>
</reference>
<reference key="6">
    <citation type="journal article" date="2000" name="J. Clin. Endocrinol. Metab.">
        <title>Combined pituitary hormone deficiency caused by a novel mutation of a highly conserved residue (F88S) in the homeodomain of PROP-1.</title>
        <authorList>
            <person name="Osorio M.G."/>
            <person name="Kopp P."/>
            <person name="Marui S."/>
            <person name="Latronico A.C."/>
            <person name="Mendonca B.B."/>
            <person name="Arnhold I.J."/>
        </authorList>
    </citation>
    <scope>VARIANT CPHD2 SER-88</scope>
    <scope>CHARACTERIZATION OF VARIANT CPHD2 SER-88</scope>
</reference>
<reference key="7">
    <citation type="journal article" date="2001" name="J. Clin. Endocrinol. Metab.">
        <title>PROP1 gene screening in patients with multiple pituitary hormone deficiency reveals two sites of hypermutability and a high incidence of corticotroph deficiency.</title>
        <authorList>
            <person name="Vallette-Kasic S."/>
            <person name="Barlier A."/>
            <person name="Teinturier C."/>
            <person name="Diaz A."/>
            <person name="Manavela M."/>
            <person name="Berthezene F."/>
            <person name="Bouchard P."/>
            <person name="Chaussain J.-L."/>
            <person name="Brauner R."/>
            <person name="Pellegrini-Bouiller I."/>
            <person name="Jaquet P."/>
            <person name="Enjalbert A."/>
            <person name="Brue T."/>
        </authorList>
    </citation>
    <scope>VARIANTS CPHD2 CYS-73 AND HIS-73</scope>
</reference>
<reference key="8">
    <citation type="journal article" date="2003" name="J. Clin. Endocrinol. Metab.">
        <title>Familial combined pituitary hormone deficiency due to a novel mutation R99Q in the hot spot region of Prophet of Pit-1 presenting as constitutional growth delay.</title>
        <authorList>
            <person name="Vieira T.C."/>
            <person name="Dias da Silva M.R."/>
            <person name="Cerutti J.M."/>
            <person name="Brunner E."/>
            <person name="Borges M."/>
            <person name="Arnaldi L.T."/>
            <person name="Kopp P."/>
            <person name="Abucham J."/>
        </authorList>
    </citation>
    <scope>VARIANT CPHD2 GLN-99</scope>
</reference>
<reference key="9">
    <citation type="journal article" date="2004" name="J. Clin. Endocrinol. Metab.">
        <title>A familial form of congenital hypopituitarism due to a PROP1 mutation in a large kindred: phenotypic and in vitro functional studies.</title>
        <authorList>
            <person name="Reynaud R."/>
            <person name="Chadli-Chaieb M."/>
            <person name="Vallette-Kasic S."/>
            <person name="Barlier A."/>
            <person name="Sarles J."/>
            <person name="Pellegrini-Bouiller I."/>
            <person name="Enjalbert A."/>
            <person name="Chaieb L."/>
            <person name="Brue T."/>
        </authorList>
    </citation>
    <scope>VARIANT CPHD2 CYS-73</scope>
    <scope>CHARACTERIZATION OF VARIANT CPHD2 CYS-73</scope>
</reference>
<reference key="10">
    <citation type="journal article" date="2009" name="Clin. Endocrinol. (Oxf.)">
        <title>Molecular analysis of novel PROP1 mutations associated with combined pituitary hormone deficiency (CPHD).</title>
        <authorList>
            <person name="Kelberman D."/>
            <person name="Turton J.P."/>
            <person name="Woods K.S."/>
            <person name="Mehta A."/>
            <person name="Al-Khawari M."/>
            <person name="Greening J."/>
            <person name="Swift P.G."/>
            <person name="Otonkoski T."/>
            <person name="Rhodes S.J."/>
            <person name="Dattani M.T."/>
        </authorList>
    </citation>
    <scope>VARIANT CPHD2 TRP-125</scope>
</reference>
<name>PROP1_HUMAN</name>
<comment type="function">
    <text>Possibly involved in the ontogenesis of pituitary gonadotropes, as well as somatotropes, lactotropes and caudomedial thyrotropes.</text>
</comment>
<comment type="interaction">
    <interactant intactId="EBI-9027467">
        <id>O75360</id>
    </interactant>
    <interactant intactId="EBI-12318443">
        <id>Q8NFV4-4</id>
        <label>ABHD11</label>
    </interactant>
    <organismsDiffer>false</organismsDiffer>
    <experiments>3</experiments>
</comment>
<comment type="interaction">
    <interactant intactId="EBI-9027467">
        <id>O75360</id>
    </interactant>
    <interactant intactId="EBI-11976299">
        <id>Q5BKX5-3</id>
        <label>ACTMAP</label>
    </interactant>
    <organismsDiffer>false</organismsDiffer>
    <experiments>3</experiments>
</comment>
<comment type="interaction">
    <interactant intactId="EBI-9027467">
        <id>O75360</id>
    </interactant>
    <interactant intactId="EBI-2117357">
        <id>P15289</id>
        <label>ARSA</label>
    </interactant>
    <organismsDiffer>false</organismsDiffer>
    <experiments>3</experiments>
</comment>
<comment type="interaction">
    <interactant intactId="EBI-9027467">
        <id>O75360</id>
    </interactant>
    <interactant intactId="EBI-742695">
        <id>Q8N1L9</id>
        <label>BATF2</label>
    </interactant>
    <organismsDiffer>false</organismsDiffer>
    <experiments>3</experiments>
</comment>
<comment type="interaction">
    <interactant intactId="EBI-9027467">
        <id>O75360</id>
    </interactant>
    <interactant intactId="EBI-946029">
        <id>Q6P1W5</id>
        <label>C1orf94</label>
    </interactant>
    <organismsDiffer>false</organismsDiffer>
    <experiments>3</experiments>
</comment>
<comment type="interaction">
    <interactant intactId="EBI-9027467">
        <id>O75360</id>
    </interactant>
    <interactant intactId="EBI-11990870">
        <id>Q6UXA7</id>
        <label>C6orf15</label>
    </interactant>
    <organismsDiffer>false</organismsDiffer>
    <experiments>3</experiments>
</comment>
<comment type="interaction">
    <interactant intactId="EBI-9027467">
        <id>O75360</id>
    </interactant>
    <interactant intactId="EBI-718615">
        <id>Q9H5F2</id>
        <label>CFAP68</label>
    </interactant>
    <organismsDiffer>false</organismsDiffer>
    <experiments>5</experiments>
</comment>
<comment type="interaction">
    <interactant intactId="EBI-9027467">
        <id>O75360</id>
    </interactant>
    <interactant intactId="EBI-12811067">
        <id>Q6J272</id>
        <label>CIMIP2A</label>
    </interactant>
    <organismsDiffer>false</organismsDiffer>
    <experiments>3</experiments>
</comment>
<comment type="interaction">
    <interactant intactId="EBI-9027467">
        <id>O75360</id>
    </interactant>
    <interactant intactId="EBI-10291911">
        <id>Q6YFQ2</id>
        <label>COX6B2</label>
    </interactant>
    <organismsDiffer>false</organismsDiffer>
    <experiments>3</experiments>
</comment>
<comment type="interaction">
    <interactant intactId="EBI-9027467">
        <id>O75360</id>
    </interactant>
    <interactant intactId="EBI-7043337">
        <id>P05813</id>
        <label>CRYBA1</label>
    </interactant>
    <organismsDiffer>false</organismsDiffer>
    <experiments>3</experiments>
</comment>
<comment type="interaction">
    <interactant intactId="EBI-9027467">
        <id>O75360</id>
    </interactant>
    <interactant intactId="EBI-3867333">
        <id>A8MQ03</id>
        <label>CYSRT1</label>
    </interactant>
    <organismsDiffer>false</organismsDiffer>
    <experiments>3</experiments>
</comment>
<comment type="interaction">
    <interactant intactId="EBI-9027467">
        <id>O75360</id>
    </interactant>
    <interactant intactId="EBI-724310">
        <id>Q15038</id>
        <label>DAZAP2</label>
    </interactant>
    <organismsDiffer>false</organismsDiffer>
    <experiments>3</experiments>
</comment>
<comment type="interaction">
    <interactant intactId="EBI-9027467">
        <id>O75360</id>
    </interactant>
    <interactant intactId="EBI-743414">
        <id>O95967</id>
        <label>EFEMP2</label>
    </interactant>
    <organismsDiffer>false</organismsDiffer>
    <experiments>3</experiments>
</comment>
<comment type="interaction">
    <interactant intactId="EBI-9027467">
        <id>O75360</id>
    </interactant>
    <interactant intactId="EBI-11978259">
        <id>Q92567-2</id>
        <label>FAM168A</label>
    </interactant>
    <organismsDiffer>false</organismsDiffer>
    <experiments>3</experiments>
</comment>
<comment type="interaction">
    <interactant intactId="EBI-9027467">
        <id>O75360</id>
    </interactant>
    <interactant intactId="EBI-745201">
        <id>Q9BSH5</id>
        <label>HDHD3</label>
    </interactant>
    <organismsDiffer>false</organismsDiffer>
    <experiments>3</experiments>
</comment>
<comment type="interaction">
    <interactant intactId="EBI-9027467">
        <id>O75360</id>
    </interactant>
    <interactant intactId="EBI-352986">
        <id>P52597</id>
        <label>HNRNPF</label>
    </interactant>
    <organismsDiffer>false</organismsDiffer>
    <experiments>3</experiments>
</comment>
<comment type="interaction">
    <interactant intactId="EBI-9027467">
        <id>O75360</id>
    </interactant>
    <interactant intactId="EBI-740785">
        <id>P49639</id>
        <label>HOXA1</label>
    </interactant>
    <organismsDiffer>false</organismsDiffer>
    <experiments>3</experiments>
</comment>
<comment type="interaction">
    <interactant intactId="EBI-9027467">
        <id>O75360</id>
    </interactant>
    <interactant intactId="EBI-748258">
        <id>Q5TA45</id>
        <label>INTS11</label>
    </interactant>
    <organismsDiffer>false</organismsDiffer>
    <experiments>3</experiments>
</comment>
<comment type="interaction">
    <interactant intactId="EBI-9027467">
        <id>O75360</id>
    </interactant>
    <interactant intactId="EBI-12811111">
        <id>Q8IUB9</id>
        <label>KRTAP19-1</label>
    </interactant>
    <organismsDiffer>false</organismsDiffer>
    <experiments>3</experiments>
</comment>
<comment type="interaction">
    <interactant intactId="EBI-9027467">
        <id>O75360</id>
    </interactant>
    <interactant intactId="EBI-12805508">
        <id>Q3LI70</id>
        <label>KRTAP19-6</label>
    </interactant>
    <organismsDiffer>false</organismsDiffer>
    <experiments>3</experiments>
</comment>
<comment type="interaction">
    <interactant intactId="EBI-9027467">
        <id>O75360</id>
    </interactant>
    <interactant intactId="EBI-10241353">
        <id>Q3SYF9</id>
        <label>KRTAP19-7</label>
    </interactant>
    <organismsDiffer>false</organismsDiffer>
    <experiments>3</experiments>
</comment>
<comment type="interaction">
    <interactant intactId="EBI-9027467">
        <id>O75360</id>
    </interactant>
    <interactant intactId="EBI-22311199">
        <id>Q3LI67</id>
        <label>KRTAP6-3</label>
    </interactant>
    <organismsDiffer>false</organismsDiffer>
    <experiments>3</experiments>
</comment>
<comment type="interaction">
    <interactant intactId="EBI-9027467">
        <id>O75360</id>
    </interactant>
    <interactant intactId="EBI-10261141">
        <id>Q8IUC2</id>
        <label>KRTAP8-1</label>
    </interactant>
    <organismsDiffer>false</organismsDiffer>
    <experiments>3</experiments>
</comment>
<comment type="interaction">
    <interactant intactId="EBI-9027467">
        <id>O75360</id>
    </interactant>
    <interactant intactId="EBI-716006">
        <id>Q9Y5V3</id>
        <label>MAGED1</label>
    </interactant>
    <organismsDiffer>false</organismsDiffer>
    <experiments>3</experiments>
</comment>
<comment type="interaction">
    <interactant intactId="EBI-9027467">
        <id>O75360</id>
    </interactant>
    <interactant intactId="EBI-10174029">
        <id>A6NJ78-4</id>
        <label>METTL15</label>
    </interactant>
    <organismsDiffer>false</organismsDiffer>
    <experiments>3</experiments>
</comment>
<comment type="interaction">
    <interactant intactId="EBI-9027467">
        <id>O75360</id>
    </interactant>
    <interactant intactId="EBI-8487781">
        <id>Q8N6F8</id>
        <label>METTL27</label>
    </interactant>
    <organismsDiffer>false</organismsDiffer>
    <experiments>3</experiments>
</comment>
<comment type="interaction">
    <interactant intactId="EBI-9027467">
        <id>O75360</id>
    </interactant>
    <interactant intactId="EBI-10250949">
        <id>Q6NSM0</id>
        <label>NR1D2</label>
    </interactant>
    <organismsDiffer>false</organismsDiffer>
    <experiments>3</experiments>
</comment>
<comment type="interaction">
    <interactant intactId="EBI-9027467">
        <id>O75360</id>
    </interactant>
    <interactant intactId="EBI-10225049">
        <id>Q7RTU3</id>
        <label>OLIG3</label>
    </interactant>
    <organismsDiffer>false</organismsDiffer>
    <experiments>3</experiments>
</comment>
<comment type="interaction">
    <interactant intactId="EBI-9027467">
        <id>O75360</id>
    </interactant>
    <interactant intactId="EBI-12813389">
        <id>Q8TDS5</id>
        <label>OXER1</label>
    </interactant>
    <organismsDiffer>false</organismsDiffer>
    <experiments>3</experiments>
</comment>
<comment type="interaction">
    <interactant intactId="EBI-9027467">
        <id>O75360</id>
    </interactant>
    <interactant intactId="EBI-10181968">
        <id>Q7Z4N8</id>
        <label>P4HA3</label>
    </interactant>
    <organismsDiffer>false</organismsDiffer>
    <experiments>3</experiments>
</comment>
<comment type="interaction">
    <interactant intactId="EBI-9027467">
        <id>O75360</id>
    </interactant>
    <interactant intactId="EBI-373552">
        <id>Q96CS7</id>
        <label>PLEKHB2</label>
    </interactant>
    <organismsDiffer>false</organismsDiffer>
    <experiments>3</experiments>
</comment>
<comment type="interaction">
    <interactant intactId="EBI-9027467">
        <id>O75360</id>
    </interactant>
    <interactant intactId="EBI-12029004">
        <id>P78424</id>
        <label>POU6F2</label>
    </interactant>
    <organismsDiffer>false</organismsDiffer>
    <experiments>3</experiments>
</comment>
<comment type="interaction">
    <interactant intactId="EBI-9027467">
        <id>O75360</id>
    </interactant>
    <interactant intactId="EBI-19951687">
        <id>A5LHX3</id>
        <label>PSMB11</label>
    </interactant>
    <organismsDiffer>false</organismsDiffer>
    <experiments>5</experiments>
</comment>
<comment type="interaction">
    <interactant intactId="EBI-9027467">
        <id>O75360</id>
    </interactant>
    <interactant intactId="EBI-603350">
        <id>P28070</id>
        <label>PSMB4</label>
    </interactant>
    <organismsDiffer>false</organismsDiffer>
    <experiments>3</experiments>
</comment>
<comment type="interaction">
    <interactant intactId="EBI-9027467">
        <id>O75360</id>
    </interactant>
    <interactant intactId="EBI-2340927">
        <id>P78317</id>
        <label>RNF4</label>
    </interactant>
    <organismsDiffer>false</organismsDiffer>
    <experiments>3</experiments>
</comment>
<comment type="interaction">
    <interactant intactId="EBI-9027467">
        <id>O75360</id>
    </interactant>
    <interactant intactId="EBI-12275818">
        <id>Q53HV7-2</id>
        <label>SMUG1</label>
    </interactant>
    <organismsDiffer>false</organismsDiffer>
    <experiments>3</experiments>
</comment>
<comment type="interaction">
    <interactant intactId="EBI-9027467">
        <id>O75360</id>
    </interactant>
    <interactant intactId="EBI-10269322">
        <id>Q8NCR6</id>
        <label>SPMIP6</label>
    </interactant>
    <organismsDiffer>false</organismsDiffer>
    <experiments>3</experiments>
</comment>
<comment type="interaction">
    <interactant intactId="EBI-9027467">
        <id>O75360</id>
    </interactant>
    <interactant intactId="EBI-80140">
        <id>P63165</id>
        <label>SUMO1</label>
    </interactant>
    <organismsDiffer>false</organismsDiffer>
    <experiments>3</experiments>
</comment>
<comment type="interaction">
    <interactant intactId="EBI-9027467">
        <id>O75360</id>
    </interactant>
    <interactant intactId="EBI-6427217">
        <id>Q9Y458</id>
        <label>TBX22</label>
    </interactant>
    <organismsDiffer>false</organismsDiffer>
    <experiments>3</experiments>
</comment>
<comment type="interaction">
    <interactant intactId="EBI-9027467">
        <id>O75360</id>
    </interactant>
    <interactant intactId="EBI-750487">
        <id>Q8WW24</id>
        <label>TEKT4</label>
    </interactant>
    <organismsDiffer>false</organismsDiffer>
    <experiments>3</experiments>
</comment>
<comment type="interaction">
    <interactant intactId="EBI-9027467">
        <id>O75360</id>
    </interactant>
    <interactant intactId="EBI-10239812">
        <id>Q96M29</id>
        <label>TEKT5</label>
    </interactant>
    <organismsDiffer>false</organismsDiffer>
    <experiments>3</experiments>
</comment>
<comment type="interaction">
    <interactant intactId="EBI-9027467">
        <id>O75360</id>
    </interactant>
    <interactant intactId="EBI-752030">
        <id>Q96A09</id>
        <label>TENT5B</label>
    </interactant>
    <organismsDiffer>false</organismsDiffer>
    <experiments>3</experiments>
</comment>
<comment type="interaction">
    <interactant intactId="EBI-9027467">
        <id>O75360</id>
    </interactant>
    <interactant intactId="EBI-715869">
        <id>Q9GZM7</id>
        <label>TINAGL1</label>
    </interactant>
    <organismsDiffer>false</organismsDiffer>
    <experiments>3</experiments>
</comment>
<comment type="interaction">
    <interactant intactId="EBI-9027467">
        <id>O75360</id>
    </interactant>
    <interactant intactId="EBI-717810">
        <id>Q08117</id>
        <label>TLE5</label>
    </interactant>
    <organismsDiffer>false</organismsDiffer>
    <experiments>4</experiments>
</comment>
<comment type="interaction">
    <interactant intactId="EBI-9027467">
        <id>O75360</id>
    </interactant>
    <interactant intactId="EBI-11741437">
        <id>Q08117-2</id>
        <label>TLE5</label>
    </interactant>
    <organismsDiffer>false</organismsDiffer>
    <experiments>3</experiments>
</comment>
<comment type="interaction">
    <interactant intactId="EBI-9027467">
        <id>O75360</id>
    </interactant>
    <interactant intactId="EBI-12038591">
        <id>Q69YG0</id>
        <label>TMEM42</label>
    </interactant>
    <organismsDiffer>false</organismsDiffer>
    <experiments>3</experiments>
</comment>
<comment type="interaction">
    <interactant intactId="EBI-9027467">
        <id>O75360</id>
    </interactant>
    <interactant intactId="EBI-5235829">
        <id>Q8IWZ5</id>
        <label>TRIM42</label>
    </interactant>
    <organismsDiffer>false</organismsDiffer>
    <experiments>3</experiments>
</comment>
<comment type="interaction">
    <interactant intactId="EBI-9027467">
        <id>O75360</id>
    </interactant>
    <interactant intactId="EBI-10180829">
        <id>Q7KZS0</id>
        <label>UBE2I</label>
    </interactant>
    <organismsDiffer>false</organismsDiffer>
    <experiments>5</experiments>
</comment>
<comment type="interaction">
    <interactant intactId="EBI-9027467">
        <id>O75360</id>
    </interactant>
    <interactant intactId="EBI-12068150">
        <id>Q6NVU6</id>
        <label>UFSP1</label>
    </interactant>
    <organismsDiffer>false</organismsDiffer>
    <experiments>3</experiments>
</comment>
<comment type="interaction">
    <interactant intactId="EBI-9027467">
        <id>O75360</id>
    </interactant>
    <interactant intactId="EBI-8832437">
        <id>Q96F45</id>
        <label>ZNF503</label>
    </interactant>
    <organismsDiffer>false</organismsDiffer>
    <experiments>3</experiments>
</comment>
<comment type="interaction">
    <interactant intactId="EBI-9027467">
        <id>O75360</id>
    </interactant>
    <interactant intactId="EBI-25475897">
        <id>P0DTC6</id>
        <label>6</label>
    </interactant>
    <organismsDiffer>true</organismsDiffer>
    <experiments>3</experiments>
</comment>
<comment type="interaction">
    <interactant intactId="EBI-9027467">
        <id>O75360</id>
    </interactant>
    <interactant intactId="EBI-25475850">
        <id>P0DTC4</id>
        <label>E</label>
    </interactant>
    <organismsDiffer>true</organismsDiffer>
    <experiments>3</experiments>
</comment>
<comment type="interaction">
    <interactant intactId="EBI-9027467">
        <id>O75360</id>
    </interactant>
    <interactant intactId="EBI-25492388">
        <id>PRO_0000449621</id>
        <label>rep</label>
        <dbReference type="UniProtKB" id="P0DTD1"/>
    </interactant>
    <organismsDiffer>true</organismsDiffer>
    <experiments>3</experiments>
</comment>
<comment type="interaction">
    <interactant intactId="EBI-9027467">
        <id>O75360</id>
    </interactant>
    <interactant intactId="EBI-25475888">
        <id>PRO_0000449630</id>
        <label>rep</label>
        <dbReference type="UniProtKB" id="P0DTD1"/>
    </interactant>
    <organismsDiffer>true</organismsDiffer>
    <experiments>3</experiments>
</comment>
<comment type="interaction">
    <interactant intactId="EBI-9027467">
        <id>O75360</id>
    </interactant>
    <interactant intactId="EBI-25475920">
        <id>PRO_0000449631</id>
        <label>rep</label>
        <dbReference type="UniProtKB" id="P0DTD1"/>
    </interactant>
    <organismsDiffer>true</organismsDiffer>
    <experiments>3</experiments>
</comment>
<comment type="interaction">
    <interactant intactId="EBI-9027467">
        <id>O75360</id>
    </interactant>
    <interactant intactId="EBI-25475891">
        <id>PRO_0000449632</id>
        <label>rep</label>
        <dbReference type="UniProtKB" id="P0DTD1"/>
    </interactant>
    <organismsDiffer>true</organismsDiffer>
    <experiments>3</experiments>
</comment>
<comment type="interaction">
    <interactant intactId="EBI-9027467">
        <id>O75360</id>
    </interactant>
    <interactant intactId="EBI-25492395">
        <id>PRO_0000449633</id>
        <label>rep</label>
        <dbReference type="UniProtKB" id="P0DTD1"/>
    </interactant>
    <organismsDiffer>true</organismsDiffer>
    <experiments>3</experiments>
</comment>
<comment type="subcellular location">
    <subcellularLocation>
        <location evidence="1">Nucleus</location>
    </subcellularLocation>
</comment>
<comment type="tissue specificity">
    <text>Expressed specifically in embryonic pituitary.</text>
</comment>
<comment type="disease" evidence="3 4 5 7 8 9 10">
    <disease id="DI-01369">
        <name>Pituitary hormone deficiency, combined, 2</name>
        <acronym>CPHD2</acronym>
        <description>Combined pituitary hormone deficiency is defined as the impaired production of growth hormone and one or more of the other five anterior pituitary hormones. CPHD2 is characterized by pleiotropic deficiencies of growth hormone, thyroid-stimulating hormone, follicle-stimulating hormone, luteinizing hormone, prolactin and adrenocorticotropic hormone.</description>
        <dbReference type="MIM" id="262600"/>
    </disease>
    <text>The disease is caused by variants affecting the gene represented in this entry.</text>
</comment>
<comment type="similarity">
    <text evidence="12">Belongs to the paired homeobox family.</text>
</comment>
<accession>O75360</accession>
<organism>
    <name type="scientific">Homo sapiens</name>
    <name type="common">Human</name>
    <dbReference type="NCBI Taxonomy" id="9606"/>
    <lineage>
        <taxon>Eukaryota</taxon>
        <taxon>Metazoa</taxon>
        <taxon>Chordata</taxon>
        <taxon>Craniata</taxon>
        <taxon>Vertebrata</taxon>
        <taxon>Euteleostomi</taxon>
        <taxon>Mammalia</taxon>
        <taxon>Eutheria</taxon>
        <taxon>Euarchontoglires</taxon>
        <taxon>Primates</taxon>
        <taxon>Haplorrhini</taxon>
        <taxon>Catarrhini</taxon>
        <taxon>Hominidae</taxon>
        <taxon>Homo</taxon>
    </lineage>
</organism>
<evidence type="ECO:0000255" key="1">
    <source>
        <dbReference type="PROSITE-ProRule" id="PRU00108"/>
    </source>
</evidence>
<evidence type="ECO:0000256" key="2">
    <source>
        <dbReference type="SAM" id="MobiDB-lite"/>
    </source>
</evidence>
<evidence type="ECO:0000269" key="3">
    <source>
    </source>
</evidence>
<evidence type="ECO:0000269" key="4">
    <source>
    </source>
</evidence>
<evidence type="ECO:0000269" key="5">
    <source>
    </source>
</evidence>
<evidence type="ECO:0000269" key="6">
    <source>
    </source>
</evidence>
<evidence type="ECO:0000269" key="7">
    <source>
    </source>
</evidence>
<evidence type="ECO:0000269" key="8">
    <source>
    </source>
</evidence>
<evidence type="ECO:0000269" key="9">
    <source>
    </source>
</evidence>
<evidence type="ECO:0000269" key="10">
    <source>
    </source>
</evidence>
<evidence type="ECO:0000269" key="11">
    <source>
    </source>
</evidence>
<evidence type="ECO:0000305" key="12"/>
<gene>
    <name type="primary">PROP1</name>
</gene>
<sequence>MEAERRRQAEKPKKGRVGSNLLPERHPATGTPTTTVDSSAPPCRRLPGAGGGRSRFSPQGGQRGRPHSRRRHRTTFSPVQLEQLESAFGRNQYPDIWARESLARDTGLSEARIQVWFQNRRAKQRKQERSLLQPLAHLSPAAFSSFLPESTACPYSYAAPPPPVTCFPHPYSHALPSQPSTGGAFALSHQSEDWYPTLHPAPAGHLPCPPPPPMLPLSLEPSKSWN</sequence>